<reference key="1">
    <citation type="journal article" date="1993" name="J. Ferment. Bioeng.">
        <title>Cloning, nucleotide sequence, and expression in Escherichia coli of DNA polymerase gene (polA) from Thermus thermophilus HB8.</title>
        <authorList>
            <person name="Asakura K."/>
            <person name="Komatsubara H."/>
            <person name="Soga S."/>
            <person name="Yomo T."/>
            <person name="Oka M."/>
            <person name="Emi S."/>
            <person name="Urabe I."/>
        </authorList>
    </citation>
    <scope>NUCLEOTIDE SEQUENCE [GENOMIC DNA]</scope>
</reference>
<reference key="2">
    <citation type="submission" date="2004-11" db="EMBL/GenBank/DDBJ databases">
        <title>Complete genome sequence of Thermus thermophilus HB8.</title>
        <authorList>
            <person name="Masui R."/>
            <person name="Kurokawa K."/>
            <person name="Nakagawa N."/>
            <person name="Tokunaga F."/>
            <person name="Koyama Y."/>
            <person name="Shibata T."/>
            <person name="Oshima T."/>
            <person name="Yokoyama S."/>
            <person name="Yasunaga T."/>
            <person name="Kuramitsu S."/>
        </authorList>
    </citation>
    <scope>NUCLEOTIDE SEQUENCE [LARGE SCALE GENOMIC DNA]</scope>
    <source>
        <strain>ATCC 27634 / DSM 579 / HB8</strain>
    </source>
</reference>
<sequence>MEAMLPLFEPKGRVLLVDGHHLAYRTFFALKGLTTSRGEPVQAVYGFAKSLLKALKEDGYKAVFVVFDAKAPSFRHEAYEAYKAGRAPTPEDFPRQLALIKELVDLLGFTRLEVPGYEADDVLATLAKKAEKEGYEVRILTADRDLYQLVSDRVAVLHPEGHLITPEWLWEKYGLRPEQWVDFRALVGDPSDNLPGVKGIGEKTALKLLKEWGSLENLLKNLDRVKPENVREKIKAHLEDLRLSLELSRVRTDLPLEVDLAQGREPDREGLRAFLERLEFGSLLHEFGLLEAPAPLEEAPWPPPEGAFVGFVLSRPEPMWAELKALAACRDGRVHRAADPLAGLKDLKEVRGLLAKDLAVLASREGLDLVPGDDPMLLAYLLDPSNTTPEGVARRYGGEWTEDAAHRALLSERLHRNLLKRLEGEEKLLWLYHEVEKPLSRVLAHMEATGVRLDVAYLQALSLELAEEIRRLEEEVFRLAGHPFNLNSRDQLERVLFDELRLPALGKTQKTGKRSTSAAVLEALREAHPIVEKILQHRELTKLKNTYVDPLPSLVHPRTGRLHTRFNQTATATGRLSSSDPNLQNIPVRTPLGQRIRRAFVAEAGWALVALDYSQIELRVLAHLSGDENLIRVFQEGKDIHTQTASWMFGVPPEAVDPLMRRAAKTVNFGVLYGMSAHRLSQELAIPYEEAVAFIERYFQSFPKVRAWIEKTLEEGRKRGYVETLFGRRRYVPDLNARVKSVREAAERMAFNMPVQGTAADLMKLAMVKLFPRLREMGARMLLQVHDELLLEAPQARAEEVAALAKEAMEKAYPLAVPLEVEVGMGEDWLSAKG</sequence>
<proteinExistence type="evidence at protein level"/>
<keyword id="KW-0002">3D-structure</keyword>
<keyword id="KW-0227">DNA damage</keyword>
<keyword id="KW-0234">DNA repair</keyword>
<keyword id="KW-0235">DNA replication</keyword>
<keyword id="KW-0238">DNA-binding</keyword>
<keyword id="KW-0239">DNA-directed DNA polymerase</keyword>
<keyword id="KW-0269">Exonuclease</keyword>
<keyword id="KW-0378">Hydrolase</keyword>
<keyword id="KW-0540">Nuclease</keyword>
<keyword id="KW-0548">Nucleotidyltransferase</keyword>
<keyword id="KW-1185">Reference proteome</keyword>
<keyword id="KW-0808">Transferase</keyword>
<comment type="function">
    <text evidence="2">In addition to polymerase activity, this DNA polymerase exhibits 5'-3' exonuclease activity.</text>
</comment>
<comment type="catalytic activity">
    <reaction evidence="2">
        <text>DNA(n) + a 2'-deoxyribonucleoside 5'-triphosphate = DNA(n+1) + diphosphate</text>
        <dbReference type="Rhea" id="RHEA:22508"/>
        <dbReference type="Rhea" id="RHEA-COMP:17339"/>
        <dbReference type="Rhea" id="RHEA-COMP:17340"/>
        <dbReference type="ChEBI" id="CHEBI:33019"/>
        <dbReference type="ChEBI" id="CHEBI:61560"/>
        <dbReference type="ChEBI" id="CHEBI:173112"/>
        <dbReference type="EC" id="2.7.7.7"/>
    </reaction>
</comment>
<comment type="similarity">
    <text evidence="4">Belongs to the DNA polymerase type-A family.</text>
</comment>
<accession>P52028</accession>
<accession>Q5SJF4</accession>
<organism>
    <name type="scientific">Thermus thermophilus (strain ATCC 27634 / DSM 579 / HB8)</name>
    <dbReference type="NCBI Taxonomy" id="300852"/>
    <lineage>
        <taxon>Bacteria</taxon>
        <taxon>Thermotogati</taxon>
        <taxon>Deinococcota</taxon>
        <taxon>Deinococci</taxon>
        <taxon>Thermales</taxon>
        <taxon>Thermaceae</taxon>
        <taxon>Thermus</taxon>
    </lineage>
</organism>
<name>DPO1T_THET8</name>
<feature type="chain" id="PRO_0000101258" description="DNA polymerase I, thermostable">
    <location>
        <begin position="1"/>
        <end position="834"/>
    </location>
</feature>
<feature type="domain" description="5'-3' exonuclease" evidence="3">
    <location>
        <begin position="176"/>
        <end position="262"/>
    </location>
</feature>
<feature type="region of interest" description="Polymerase" evidence="1">
    <location>
        <begin position="412"/>
        <end position="834"/>
    </location>
</feature>
<feature type="sequence conflict" description="In Ref. 1; BAA06033." evidence="4" ref="1">
    <original>L</original>
    <variation>R</variation>
    <location>
        <position position="453"/>
    </location>
</feature>
<feature type="strand" evidence="5">
    <location>
        <begin position="297"/>
        <end position="302"/>
    </location>
</feature>
<feature type="strand" evidence="5">
    <location>
        <begin position="308"/>
        <end position="316"/>
    </location>
</feature>
<feature type="helix" evidence="5">
    <location>
        <begin position="318"/>
        <end position="320"/>
    </location>
</feature>
<feature type="strand" evidence="5">
    <location>
        <begin position="323"/>
        <end position="336"/>
    </location>
</feature>
<feature type="helix" evidence="5">
    <location>
        <begin position="340"/>
        <end position="343"/>
    </location>
</feature>
<feature type="helix" evidence="5">
    <location>
        <begin position="344"/>
        <end position="346"/>
    </location>
</feature>
<feature type="strand" evidence="5">
    <location>
        <begin position="348"/>
        <end position="350"/>
    </location>
</feature>
<feature type="helix" evidence="5">
    <location>
        <begin position="355"/>
        <end position="364"/>
    </location>
</feature>
<feature type="helix" evidence="5">
    <location>
        <begin position="375"/>
        <end position="382"/>
    </location>
</feature>
<feature type="helix" evidence="5">
    <location>
        <begin position="389"/>
        <end position="396"/>
    </location>
</feature>
<feature type="helix" evidence="5">
    <location>
        <begin position="404"/>
        <end position="421"/>
    </location>
</feature>
<feature type="turn" evidence="5">
    <location>
        <begin position="422"/>
        <end position="424"/>
    </location>
</feature>
<feature type="helix" evidence="5">
    <location>
        <begin position="426"/>
        <end position="434"/>
    </location>
</feature>
<feature type="helix" evidence="5">
    <location>
        <begin position="436"/>
        <end position="449"/>
    </location>
</feature>
<feature type="strand" evidence="5">
    <location>
        <begin position="451"/>
        <end position="453"/>
    </location>
</feature>
<feature type="helix" evidence="5">
    <location>
        <begin position="455"/>
        <end position="480"/>
    </location>
</feature>
<feature type="helix" evidence="5">
    <location>
        <begin position="489"/>
        <end position="497"/>
    </location>
</feature>
<feature type="helix" evidence="5">
    <location>
        <begin position="518"/>
        <end position="524"/>
    </location>
</feature>
<feature type="turn" evidence="5">
    <location>
        <begin position="525"/>
        <end position="527"/>
    </location>
</feature>
<feature type="helix" evidence="5">
    <location>
        <begin position="529"/>
        <end position="547"/>
    </location>
</feature>
<feature type="turn" evidence="5">
    <location>
        <begin position="548"/>
        <end position="551"/>
    </location>
</feature>
<feature type="helix" evidence="5">
    <location>
        <begin position="552"/>
        <end position="554"/>
    </location>
</feature>
<feature type="turn" evidence="5">
    <location>
        <begin position="557"/>
        <end position="559"/>
    </location>
</feature>
<feature type="strand" evidence="5">
    <location>
        <begin position="560"/>
        <end position="562"/>
    </location>
</feature>
<feature type="strand" evidence="5">
    <location>
        <begin position="565"/>
        <end position="569"/>
    </location>
</feature>
<feature type="strand" evidence="5">
    <location>
        <begin position="577"/>
        <end position="581"/>
    </location>
</feature>
<feature type="helix" evidence="5">
    <location>
        <begin position="583"/>
        <end position="585"/>
    </location>
</feature>
<feature type="strand" evidence="5">
    <location>
        <begin position="588"/>
        <end position="590"/>
    </location>
</feature>
<feature type="helix" evidence="5">
    <location>
        <begin position="591"/>
        <end position="597"/>
    </location>
</feature>
<feature type="strand" evidence="5">
    <location>
        <begin position="606"/>
        <end position="613"/>
    </location>
</feature>
<feature type="helix" evidence="5">
    <location>
        <begin position="616"/>
        <end position="625"/>
    </location>
</feature>
<feature type="helix" evidence="5">
    <location>
        <begin position="628"/>
        <end position="636"/>
    </location>
</feature>
<feature type="helix" evidence="5">
    <location>
        <begin position="640"/>
        <end position="649"/>
    </location>
</feature>
<feature type="helix" evidence="5">
    <location>
        <begin position="653"/>
        <end position="655"/>
    </location>
</feature>
<feature type="helix" evidence="5">
    <location>
        <begin position="658"/>
        <end position="670"/>
    </location>
</feature>
<feature type="turn" evidence="5">
    <location>
        <begin position="671"/>
        <end position="674"/>
    </location>
</feature>
<feature type="helix" evidence="5">
    <location>
        <begin position="677"/>
        <end position="684"/>
    </location>
</feature>
<feature type="helix" evidence="5">
    <location>
        <begin position="688"/>
        <end position="701"/>
    </location>
</feature>
<feature type="helix" evidence="5">
    <location>
        <begin position="703"/>
        <end position="719"/>
    </location>
</feature>
<feature type="strand" evidence="5">
    <location>
        <begin position="720"/>
        <end position="723"/>
    </location>
</feature>
<feature type="strand" evidence="5">
    <location>
        <begin position="729"/>
        <end position="731"/>
    </location>
</feature>
<feature type="helix" evidence="5">
    <location>
        <begin position="733"/>
        <end position="736"/>
    </location>
</feature>
<feature type="helix" evidence="5">
    <location>
        <begin position="740"/>
        <end position="776"/>
    </location>
</feature>
<feature type="strand" evidence="5">
    <location>
        <begin position="780"/>
        <end position="785"/>
    </location>
</feature>
<feature type="strand" evidence="5">
    <location>
        <begin position="788"/>
        <end position="794"/>
    </location>
</feature>
<feature type="helix" evidence="5">
    <location>
        <begin position="795"/>
        <end position="797"/>
    </location>
</feature>
<feature type="helix" evidence="5">
    <location>
        <begin position="798"/>
        <end position="810"/>
    </location>
</feature>
<feature type="strand" evidence="5">
    <location>
        <begin position="821"/>
        <end position="828"/>
    </location>
</feature>
<feature type="helix" evidence="5">
    <location>
        <begin position="829"/>
        <end position="833"/>
    </location>
</feature>
<evidence type="ECO:0000250" key="1"/>
<evidence type="ECO:0000250" key="2">
    <source>
        <dbReference type="UniProtKB" id="P52026"/>
    </source>
</evidence>
<evidence type="ECO:0000255" key="3"/>
<evidence type="ECO:0000305" key="4"/>
<evidence type="ECO:0007829" key="5">
    <source>
        <dbReference type="PDB" id="8XJR"/>
    </source>
</evidence>
<protein>
    <recommendedName>
        <fullName>DNA polymerase I, thermostable</fullName>
        <ecNumber evidence="2">2.7.7.7</ecNumber>
    </recommendedName>
    <alternativeName>
        <fullName>Tth polymerase 1</fullName>
    </alternativeName>
</protein>
<gene>
    <name type="primary">polA</name>
    <name type="ordered locus">TTHA1054</name>
</gene>
<dbReference type="EC" id="2.7.7.7" evidence="2"/>
<dbReference type="EMBL" id="D28878">
    <property type="protein sequence ID" value="BAA06033.1"/>
    <property type="molecule type" value="Genomic_DNA"/>
</dbReference>
<dbReference type="EMBL" id="AP008226">
    <property type="protein sequence ID" value="BAD70877.1"/>
    <property type="molecule type" value="Genomic_DNA"/>
</dbReference>
<dbReference type="RefSeq" id="WP_011228405.1">
    <property type="nucleotide sequence ID" value="NC_006461.1"/>
</dbReference>
<dbReference type="RefSeq" id="YP_144320.1">
    <property type="nucleotide sequence ID" value="NC_006461.1"/>
</dbReference>
<dbReference type="PDB" id="8XJR">
    <property type="method" value="X-ray"/>
    <property type="resolution" value="1.97 A"/>
    <property type="chains" value="A=292-833"/>
</dbReference>
<dbReference type="PDB" id="8XK9">
    <property type="method" value="X-ray"/>
    <property type="resolution" value="2.40 A"/>
    <property type="chains" value="A/D=296-833"/>
</dbReference>
<dbReference type="PDB" id="9FM3">
    <property type="method" value="X-ray"/>
    <property type="resolution" value="2.59 A"/>
    <property type="chains" value="A=296-833"/>
</dbReference>
<dbReference type="PDB" id="9FMF">
    <property type="method" value="X-ray"/>
    <property type="resolution" value="2.10 A"/>
    <property type="chains" value="A=296-833"/>
</dbReference>
<dbReference type="PDBsum" id="8XJR"/>
<dbReference type="PDBsum" id="8XK9"/>
<dbReference type="PDBsum" id="9FM3"/>
<dbReference type="PDBsum" id="9FMF"/>
<dbReference type="SMR" id="P52028"/>
<dbReference type="EnsemblBacteria" id="BAD70877">
    <property type="protein sequence ID" value="BAD70877"/>
    <property type="gene ID" value="BAD70877"/>
</dbReference>
<dbReference type="GeneID" id="3169068"/>
<dbReference type="KEGG" id="ttj:TTHA1054"/>
<dbReference type="PATRIC" id="fig|300852.9.peg.1034"/>
<dbReference type="eggNOG" id="COG0258">
    <property type="taxonomic scope" value="Bacteria"/>
</dbReference>
<dbReference type="eggNOG" id="COG0749">
    <property type="taxonomic scope" value="Bacteria"/>
</dbReference>
<dbReference type="HOGENOM" id="CLU_004675_0_0_0"/>
<dbReference type="PhylomeDB" id="P52028"/>
<dbReference type="Proteomes" id="UP000000532">
    <property type="component" value="Chromosome"/>
</dbReference>
<dbReference type="GO" id="GO:0008409">
    <property type="term" value="F:5'-3' exonuclease activity"/>
    <property type="evidence" value="ECO:0007669"/>
    <property type="project" value="InterPro"/>
</dbReference>
<dbReference type="GO" id="GO:0003677">
    <property type="term" value="F:DNA binding"/>
    <property type="evidence" value="ECO:0007669"/>
    <property type="project" value="UniProtKB-KW"/>
</dbReference>
<dbReference type="GO" id="GO:0003887">
    <property type="term" value="F:DNA-directed DNA polymerase activity"/>
    <property type="evidence" value="ECO:0007669"/>
    <property type="project" value="UniProtKB-KW"/>
</dbReference>
<dbReference type="GO" id="GO:0001882">
    <property type="term" value="F:nucleoside binding"/>
    <property type="evidence" value="ECO:0007669"/>
    <property type="project" value="InterPro"/>
</dbReference>
<dbReference type="GO" id="GO:0006261">
    <property type="term" value="P:DNA-templated DNA replication"/>
    <property type="evidence" value="ECO:0007669"/>
    <property type="project" value="InterPro"/>
</dbReference>
<dbReference type="GO" id="GO:0006302">
    <property type="term" value="P:double-strand break repair"/>
    <property type="evidence" value="ECO:0007669"/>
    <property type="project" value="TreeGrafter"/>
</dbReference>
<dbReference type="CDD" id="cd08637">
    <property type="entry name" value="DNA_pol_A_pol_I_C"/>
    <property type="match status" value="1"/>
</dbReference>
<dbReference type="CDD" id="cd09898">
    <property type="entry name" value="H3TH_53EXO"/>
    <property type="match status" value="1"/>
</dbReference>
<dbReference type="CDD" id="cd09859">
    <property type="entry name" value="PIN_53EXO"/>
    <property type="match status" value="1"/>
</dbReference>
<dbReference type="FunFam" id="1.10.150.20:FF:000002">
    <property type="entry name" value="DNA polymerase I"/>
    <property type="match status" value="1"/>
</dbReference>
<dbReference type="FunFam" id="1.10.150.20:FF:000003">
    <property type="entry name" value="DNA polymerase I"/>
    <property type="match status" value="1"/>
</dbReference>
<dbReference type="FunFam" id="1.20.1060.10:FF:000001">
    <property type="entry name" value="DNA polymerase I"/>
    <property type="match status" value="1"/>
</dbReference>
<dbReference type="FunFam" id="3.40.50.1010:FF:000001">
    <property type="entry name" value="DNA polymerase I"/>
    <property type="match status" value="1"/>
</dbReference>
<dbReference type="Gene3D" id="3.30.70.370">
    <property type="match status" value="1"/>
</dbReference>
<dbReference type="Gene3D" id="1.10.150.20">
    <property type="entry name" value="5' to 3' exonuclease, C-terminal subdomain"/>
    <property type="match status" value="2"/>
</dbReference>
<dbReference type="Gene3D" id="3.40.50.1010">
    <property type="entry name" value="5'-nuclease"/>
    <property type="match status" value="1"/>
</dbReference>
<dbReference type="Gene3D" id="3.30.420.10">
    <property type="entry name" value="Ribonuclease H-like superfamily/Ribonuclease H"/>
    <property type="match status" value="1"/>
</dbReference>
<dbReference type="Gene3D" id="1.20.1060.10">
    <property type="entry name" value="Taq DNA Polymerase, Chain T, domain 4"/>
    <property type="match status" value="1"/>
</dbReference>
<dbReference type="InterPro" id="IPR020046">
    <property type="entry name" value="5-3_exonucl_a-hlix_arch_N"/>
</dbReference>
<dbReference type="InterPro" id="IPR002421">
    <property type="entry name" value="5-3_exonuclease"/>
</dbReference>
<dbReference type="InterPro" id="IPR036279">
    <property type="entry name" value="5-3_exonuclease_C_sf"/>
</dbReference>
<dbReference type="InterPro" id="IPR019760">
    <property type="entry name" value="DNA-dir_DNA_pol_A_CS"/>
</dbReference>
<dbReference type="InterPro" id="IPR001098">
    <property type="entry name" value="DNA-dir_DNA_pol_A_palm_dom"/>
</dbReference>
<dbReference type="InterPro" id="IPR043502">
    <property type="entry name" value="DNA/RNA_pol_sf"/>
</dbReference>
<dbReference type="InterPro" id="IPR020045">
    <property type="entry name" value="DNA_polI_H3TH"/>
</dbReference>
<dbReference type="InterPro" id="IPR018320">
    <property type="entry name" value="DNA_polymerase_1"/>
</dbReference>
<dbReference type="InterPro" id="IPR002298">
    <property type="entry name" value="DNA_polymerase_A"/>
</dbReference>
<dbReference type="InterPro" id="IPR008918">
    <property type="entry name" value="HhH2"/>
</dbReference>
<dbReference type="InterPro" id="IPR029060">
    <property type="entry name" value="PIN-like_dom_sf"/>
</dbReference>
<dbReference type="InterPro" id="IPR012337">
    <property type="entry name" value="RNaseH-like_sf"/>
</dbReference>
<dbReference type="InterPro" id="IPR036397">
    <property type="entry name" value="RNaseH_sf"/>
</dbReference>
<dbReference type="InterPro" id="IPR015361">
    <property type="entry name" value="Taq_pol_thermo_exonuc"/>
</dbReference>
<dbReference type="NCBIfam" id="TIGR00593">
    <property type="entry name" value="pola"/>
    <property type="match status" value="1"/>
</dbReference>
<dbReference type="PANTHER" id="PTHR10133">
    <property type="entry name" value="DNA POLYMERASE I"/>
    <property type="match status" value="1"/>
</dbReference>
<dbReference type="PANTHER" id="PTHR10133:SF27">
    <property type="entry name" value="DNA POLYMERASE NU"/>
    <property type="match status" value="1"/>
</dbReference>
<dbReference type="Pfam" id="PF01367">
    <property type="entry name" value="5_3_exonuc"/>
    <property type="match status" value="1"/>
</dbReference>
<dbReference type="Pfam" id="PF02739">
    <property type="entry name" value="5_3_exonuc_N"/>
    <property type="match status" value="1"/>
</dbReference>
<dbReference type="Pfam" id="PF00476">
    <property type="entry name" value="DNA_pol_A"/>
    <property type="match status" value="1"/>
</dbReference>
<dbReference type="Pfam" id="PF09281">
    <property type="entry name" value="Taq-exonuc"/>
    <property type="match status" value="1"/>
</dbReference>
<dbReference type="PRINTS" id="PR00868">
    <property type="entry name" value="DNAPOLI"/>
</dbReference>
<dbReference type="SMART" id="SM00475">
    <property type="entry name" value="53EXOc"/>
    <property type="match status" value="1"/>
</dbReference>
<dbReference type="SMART" id="SM00279">
    <property type="entry name" value="HhH2"/>
    <property type="match status" value="1"/>
</dbReference>
<dbReference type="SMART" id="SM00482">
    <property type="entry name" value="POLAc"/>
    <property type="match status" value="1"/>
</dbReference>
<dbReference type="SUPFAM" id="SSF47807">
    <property type="entry name" value="5' to 3' exonuclease, C-terminal subdomain"/>
    <property type="match status" value="1"/>
</dbReference>
<dbReference type="SUPFAM" id="SSF56672">
    <property type="entry name" value="DNA/RNA polymerases"/>
    <property type="match status" value="1"/>
</dbReference>
<dbReference type="SUPFAM" id="SSF88723">
    <property type="entry name" value="PIN domain-like"/>
    <property type="match status" value="1"/>
</dbReference>
<dbReference type="SUPFAM" id="SSF53098">
    <property type="entry name" value="Ribonuclease H-like"/>
    <property type="match status" value="1"/>
</dbReference>
<dbReference type="PROSITE" id="PS00447">
    <property type="entry name" value="DNA_POLYMERASE_A"/>
    <property type="match status" value="1"/>
</dbReference>